<dbReference type="EMBL" id="Y08559">
    <property type="protein sequence ID" value="CAA69855.1"/>
    <property type="molecule type" value="Genomic_DNA"/>
</dbReference>
<dbReference type="EMBL" id="AL009126">
    <property type="protein sequence ID" value="CAB15672.1"/>
    <property type="molecule type" value="Genomic_DNA"/>
</dbReference>
<dbReference type="PIR" id="B69713">
    <property type="entry name" value="B69713"/>
</dbReference>
<dbReference type="RefSeq" id="NP_391536.1">
    <property type="nucleotide sequence ID" value="NC_000964.3"/>
</dbReference>
<dbReference type="RefSeq" id="WP_003227751.1">
    <property type="nucleotide sequence ID" value="NZ_OZ025638.1"/>
</dbReference>
<dbReference type="PDB" id="3TUF">
    <property type="method" value="X-ray"/>
    <property type="resolution" value="2.26 A"/>
    <property type="chains" value="B=43-283"/>
</dbReference>
<dbReference type="PDB" id="3UZ0">
    <property type="method" value="X-ray"/>
    <property type="resolution" value="2.82 A"/>
    <property type="chains" value="B/D=73-220"/>
</dbReference>
<dbReference type="PDBsum" id="3TUF"/>
<dbReference type="PDBsum" id="3UZ0"/>
<dbReference type="SMR" id="P71044"/>
<dbReference type="DIP" id="DIP-60029N"/>
<dbReference type="FunCoup" id="P71044">
    <property type="interactions" value="21"/>
</dbReference>
<dbReference type="IntAct" id="P71044">
    <property type="interactions" value="1"/>
</dbReference>
<dbReference type="STRING" id="224308.BSU36550"/>
<dbReference type="TCDB" id="1.A.34.1.1">
    <property type="family name" value="the bacillus gap junction-like channel-forming complex (gj-cc) family"/>
</dbReference>
<dbReference type="TCDB" id="9.B.70.1.1">
    <property type="family name" value="the multicomponent putative spoiiiae exporter (spoiiia-e) family"/>
</dbReference>
<dbReference type="PaxDb" id="224308-BSU36550"/>
<dbReference type="DNASU" id="936951"/>
<dbReference type="EnsemblBacteria" id="CAB15672">
    <property type="protein sequence ID" value="CAB15672"/>
    <property type="gene ID" value="BSU_36550"/>
</dbReference>
<dbReference type="GeneID" id="936951"/>
<dbReference type="KEGG" id="bsu:BSU36550"/>
<dbReference type="PATRIC" id="fig|224308.179.peg.3955"/>
<dbReference type="eggNOG" id="COG0739">
    <property type="taxonomic scope" value="Bacteria"/>
</dbReference>
<dbReference type="InParanoid" id="P71044"/>
<dbReference type="OrthoDB" id="2050153at2"/>
<dbReference type="BioCyc" id="BSUB:BSU36550-MONOMER"/>
<dbReference type="EvolutionaryTrace" id="P71044"/>
<dbReference type="Proteomes" id="UP000001570">
    <property type="component" value="Chromosome"/>
</dbReference>
<dbReference type="GO" id="GO:0042601">
    <property type="term" value="C:endospore-forming forespore"/>
    <property type="evidence" value="ECO:0000315"/>
    <property type="project" value="CACAO"/>
</dbReference>
<dbReference type="GO" id="GO:0016020">
    <property type="term" value="C:membrane"/>
    <property type="evidence" value="ECO:0007669"/>
    <property type="project" value="UniProtKB-KW"/>
</dbReference>
<dbReference type="GO" id="GO:0004222">
    <property type="term" value="F:metalloendopeptidase activity"/>
    <property type="evidence" value="ECO:0000318"/>
    <property type="project" value="GO_Central"/>
</dbReference>
<dbReference type="GO" id="GO:0030435">
    <property type="term" value="P:sporulation resulting in formation of a cellular spore"/>
    <property type="evidence" value="ECO:0007669"/>
    <property type="project" value="UniProtKB-KW"/>
</dbReference>
<dbReference type="CDD" id="cd12797">
    <property type="entry name" value="M23_peptidase"/>
    <property type="match status" value="1"/>
</dbReference>
<dbReference type="FunFam" id="2.70.70.10:FF:000008">
    <property type="entry name" value="Stage II sporulation protein"/>
    <property type="match status" value="1"/>
</dbReference>
<dbReference type="Gene3D" id="2.70.70.10">
    <property type="entry name" value="Glucose Permease (Domain IIA)"/>
    <property type="match status" value="1"/>
</dbReference>
<dbReference type="InterPro" id="IPR050570">
    <property type="entry name" value="Cell_wall_metabolism_enzyme"/>
</dbReference>
<dbReference type="InterPro" id="IPR011055">
    <property type="entry name" value="Dup_hybrid_motif"/>
</dbReference>
<dbReference type="InterPro" id="IPR016047">
    <property type="entry name" value="Peptidase_M23"/>
</dbReference>
<dbReference type="PANTHER" id="PTHR21666">
    <property type="entry name" value="PEPTIDASE-RELATED"/>
    <property type="match status" value="1"/>
</dbReference>
<dbReference type="PANTHER" id="PTHR21666:SF291">
    <property type="entry name" value="STAGE II SPORULATION PROTEIN Q"/>
    <property type="match status" value="1"/>
</dbReference>
<dbReference type="Pfam" id="PF01551">
    <property type="entry name" value="Peptidase_M23"/>
    <property type="match status" value="1"/>
</dbReference>
<dbReference type="SUPFAM" id="SSF51261">
    <property type="entry name" value="Duplicated hybrid motif"/>
    <property type="match status" value="1"/>
</dbReference>
<feature type="chain" id="PRO_0000360550" description="Stage II sporulation protein Q">
    <location>
        <begin position="1"/>
        <end position="283"/>
    </location>
</feature>
<feature type="transmembrane region" description="Helical" evidence="1">
    <location>
        <begin position="22"/>
        <end position="42"/>
    </location>
</feature>
<feature type="region of interest" description="Disordered" evidence="2">
    <location>
        <begin position="228"/>
        <end position="283"/>
    </location>
</feature>
<feature type="compositionally biased region" description="Basic and acidic residues" evidence="2">
    <location>
        <begin position="243"/>
        <end position="271"/>
    </location>
</feature>
<feature type="strand" evidence="15">
    <location>
        <begin position="77"/>
        <end position="79"/>
    </location>
</feature>
<feature type="strand" evidence="15">
    <location>
        <begin position="82"/>
        <end position="85"/>
    </location>
</feature>
<feature type="helix" evidence="15">
    <location>
        <begin position="86"/>
        <end position="88"/>
    </location>
</feature>
<feature type="strand" evidence="15">
    <location>
        <begin position="89"/>
        <end position="93"/>
    </location>
</feature>
<feature type="strand" evidence="16">
    <location>
        <begin position="98"/>
        <end position="100"/>
    </location>
</feature>
<feature type="helix" evidence="15">
    <location>
        <begin position="102"/>
        <end position="107"/>
    </location>
</feature>
<feature type="strand" evidence="15">
    <location>
        <begin position="109"/>
        <end position="111"/>
    </location>
</feature>
<feature type="strand" evidence="15">
    <location>
        <begin position="113"/>
        <end position="118"/>
    </location>
</feature>
<feature type="strand" evidence="15">
    <location>
        <begin position="121"/>
        <end position="126"/>
    </location>
</feature>
<feature type="strand" evidence="15">
    <location>
        <begin position="133"/>
        <end position="135"/>
    </location>
</feature>
<feature type="strand" evidence="15">
    <location>
        <begin position="140"/>
        <end position="148"/>
    </location>
</feature>
<feature type="turn" evidence="15">
    <location>
        <begin position="149"/>
        <end position="151"/>
    </location>
</feature>
<feature type="strand" evidence="15">
    <location>
        <begin position="152"/>
        <end position="158"/>
    </location>
</feature>
<feature type="helix" evidence="16">
    <location>
        <begin position="160"/>
        <end position="162"/>
    </location>
</feature>
<feature type="strand" evidence="15">
    <location>
        <begin position="163"/>
        <end position="174"/>
    </location>
</feature>
<feature type="strand" evidence="15">
    <location>
        <begin position="186"/>
        <end position="189"/>
    </location>
</feature>
<feature type="helix" evidence="15">
    <location>
        <begin position="197"/>
        <end position="199"/>
    </location>
</feature>
<feature type="strand" evidence="15">
    <location>
        <begin position="201"/>
        <end position="209"/>
    </location>
</feature>
<feature type="strand" evidence="15">
    <location>
        <begin position="212"/>
        <end position="214"/>
    </location>
</feature>
<feature type="helix" evidence="15">
    <location>
        <begin position="216"/>
        <end position="218"/>
    </location>
</feature>
<feature type="helix" evidence="15">
    <location>
        <begin position="224"/>
        <end position="227"/>
    </location>
</feature>
<accession>P71044</accession>
<accession>Q795A1</accession>
<proteinExistence type="evidence at protein level"/>
<name>SP2Q_BACSU</name>
<keyword id="KW-0002">3D-structure</keyword>
<keyword id="KW-0472">Membrane</keyword>
<keyword id="KW-1185">Reference proteome</keyword>
<keyword id="KW-0749">Sporulation</keyword>
<keyword id="KW-0812">Transmembrane</keyword>
<keyword id="KW-1133">Transmembrane helix</keyword>
<sequence length="283" mass="31113">MREEEKKTSQVKKLQQFFRKRWVFPAIYLVSAAVILTAVLWYQSVSNDEVKDQLADNGGNSAYDNNDDAVEVGKSMENVAMPVVDSENVSVVKKFYETDAAKEEKEAALVTYNNTYSLSKGIDLAEKDGKDFDVSASLSGTVVKAEKDPVLGYVVEVEHADGLSTVYQSLSEVSVEQGDKVKQNQVIGKSGKNLYSEDSGNHVHFEIRKDGVAMNPLNFMDKPVSSIEKAATQETEESIQQSSEKKDGSTEKGTEEKSGEKKDDSTDKSGSKESSTTEDTEQS</sequence>
<protein>
    <recommendedName>
        <fullName>Stage II sporulation protein Q</fullName>
    </recommendedName>
</protein>
<organism>
    <name type="scientific">Bacillus subtilis (strain 168)</name>
    <dbReference type="NCBI Taxonomy" id="224308"/>
    <lineage>
        <taxon>Bacteria</taxon>
        <taxon>Bacillati</taxon>
        <taxon>Bacillota</taxon>
        <taxon>Bacilli</taxon>
        <taxon>Bacillales</taxon>
        <taxon>Bacillaceae</taxon>
        <taxon>Bacillus</taxon>
    </lineage>
</organism>
<gene>
    <name type="primary">spoIIQ</name>
    <name type="synonym">ywnI</name>
    <name type="ordered locus">BSU36550</name>
</gene>
<evidence type="ECO:0000255" key="1"/>
<evidence type="ECO:0000256" key="2">
    <source>
        <dbReference type="SAM" id="MobiDB-lite"/>
    </source>
</evidence>
<evidence type="ECO:0000269" key="3">
    <source>
    </source>
</evidence>
<evidence type="ECO:0000269" key="4">
    <source>
    </source>
</evidence>
<evidence type="ECO:0000269" key="5">
    <source>
    </source>
</evidence>
<evidence type="ECO:0000269" key="6">
    <source>
    </source>
</evidence>
<evidence type="ECO:0000269" key="7">
    <source>
    </source>
</evidence>
<evidence type="ECO:0000269" key="8">
    <source>
    </source>
</evidence>
<evidence type="ECO:0000269" key="9">
    <source>
    </source>
</evidence>
<evidence type="ECO:0000269" key="10">
    <source>
    </source>
</evidence>
<evidence type="ECO:0000269" key="11">
    <source>
    </source>
</evidence>
<evidence type="ECO:0000269" key="12">
    <source>
    </source>
</evidence>
<evidence type="ECO:0000269" key="13">
    <source>
    </source>
</evidence>
<evidence type="ECO:0000269" key="14">
    <source>
    </source>
</evidence>
<evidence type="ECO:0007829" key="15">
    <source>
        <dbReference type="PDB" id="3TUF"/>
    </source>
</evidence>
<evidence type="ECO:0007829" key="16">
    <source>
        <dbReference type="PDB" id="3UZ0"/>
    </source>
</evidence>
<comment type="function">
    <text evidence="3 6 7 8 9 10 11 12 13 14">Involved in forespore engulfment and required for anchoring membrane proteins on the forespore side of the septal membrane. Forms a channel with SpoIIIAH that is open on the forespore end and closed (or gated) on the mother cell end. This allows sigma-E-directed gene expression in the mother-cell compartment of the sporangium to trigger the activation of sigma-G forespore-specific gene expression by a pathway of intercellular signaling.</text>
</comment>
<comment type="subunit">
    <text evidence="5 6 11 13">Interacts with SpoIIIAH and SpoIIE.</text>
</comment>
<comment type="interaction">
    <interactant intactId="EBI-6413220">
        <id>P71044</id>
    </interactant>
    <interactant intactId="EBI-6413215">
        <id>P49785</id>
        <label>spoIIIAH</label>
    </interactant>
    <organismsDiffer>false</organismsDiffer>
    <experiments>13</experiments>
</comment>
<comment type="subcellular location">
    <subcellularLocation>
        <location evidence="4 5 6 11 13 14">Forespore membrane</location>
        <topology evidence="4 5 6 11 13 14">Single-pass membrane protein</topology>
    </subcellularLocation>
    <text>Localizes to the engulfing septal membranes.</text>
</comment>
<comment type="developmental stage">
    <text evidence="6 14">Specifically expressed in the forespore under the control of the sigma-K factor.</text>
</comment>
<reference key="1">
    <citation type="journal article" date="1997" name="J. Bacteriol.">
        <title>The Bacillus subtilis ureABC operon.</title>
        <authorList>
            <person name="Cruz-Ramos H."/>
            <person name="Glaser P."/>
            <person name="Wray L.V. Jr."/>
            <person name="Fisher S.H."/>
        </authorList>
    </citation>
    <scope>NUCLEOTIDE SEQUENCE [GENOMIC DNA]</scope>
    <source>
        <strain>168</strain>
    </source>
</reference>
<reference key="2">
    <citation type="journal article" date="1997" name="Nature">
        <title>The complete genome sequence of the Gram-positive bacterium Bacillus subtilis.</title>
        <authorList>
            <person name="Kunst F."/>
            <person name="Ogasawara N."/>
            <person name="Moszer I."/>
            <person name="Albertini A.M."/>
            <person name="Alloni G."/>
            <person name="Azevedo V."/>
            <person name="Bertero M.G."/>
            <person name="Bessieres P."/>
            <person name="Bolotin A."/>
            <person name="Borchert S."/>
            <person name="Borriss R."/>
            <person name="Boursier L."/>
            <person name="Brans A."/>
            <person name="Braun M."/>
            <person name="Brignell S.C."/>
            <person name="Bron S."/>
            <person name="Brouillet S."/>
            <person name="Bruschi C.V."/>
            <person name="Caldwell B."/>
            <person name="Capuano V."/>
            <person name="Carter N.M."/>
            <person name="Choi S.-K."/>
            <person name="Codani J.-J."/>
            <person name="Connerton I.F."/>
            <person name="Cummings N.J."/>
            <person name="Daniel R.A."/>
            <person name="Denizot F."/>
            <person name="Devine K.M."/>
            <person name="Duesterhoeft A."/>
            <person name="Ehrlich S.D."/>
            <person name="Emmerson P.T."/>
            <person name="Entian K.-D."/>
            <person name="Errington J."/>
            <person name="Fabret C."/>
            <person name="Ferrari E."/>
            <person name="Foulger D."/>
            <person name="Fritz C."/>
            <person name="Fujita M."/>
            <person name="Fujita Y."/>
            <person name="Fuma S."/>
            <person name="Galizzi A."/>
            <person name="Galleron N."/>
            <person name="Ghim S.-Y."/>
            <person name="Glaser P."/>
            <person name="Goffeau A."/>
            <person name="Golightly E.J."/>
            <person name="Grandi G."/>
            <person name="Guiseppi G."/>
            <person name="Guy B.J."/>
            <person name="Haga K."/>
            <person name="Haiech J."/>
            <person name="Harwood C.R."/>
            <person name="Henaut A."/>
            <person name="Hilbert H."/>
            <person name="Holsappel S."/>
            <person name="Hosono S."/>
            <person name="Hullo M.-F."/>
            <person name="Itaya M."/>
            <person name="Jones L.-M."/>
            <person name="Joris B."/>
            <person name="Karamata D."/>
            <person name="Kasahara Y."/>
            <person name="Klaerr-Blanchard M."/>
            <person name="Klein C."/>
            <person name="Kobayashi Y."/>
            <person name="Koetter P."/>
            <person name="Koningstein G."/>
            <person name="Krogh S."/>
            <person name="Kumano M."/>
            <person name="Kurita K."/>
            <person name="Lapidus A."/>
            <person name="Lardinois S."/>
            <person name="Lauber J."/>
            <person name="Lazarevic V."/>
            <person name="Lee S.-M."/>
            <person name="Levine A."/>
            <person name="Liu H."/>
            <person name="Masuda S."/>
            <person name="Mauel C."/>
            <person name="Medigue C."/>
            <person name="Medina N."/>
            <person name="Mellado R.P."/>
            <person name="Mizuno M."/>
            <person name="Moestl D."/>
            <person name="Nakai S."/>
            <person name="Noback M."/>
            <person name="Noone D."/>
            <person name="O'Reilly M."/>
            <person name="Ogawa K."/>
            <person name="Ogiwara A."/>
            <person name="Oudega B."/>
            <person name="Park S.-H."/>
            <person name="Parro V."/>
            <person name="Pohl T.M."/>
            <person name="Portetelle D."/>
            <person name="Porwollik S."/>
            <person name="Prescott A.M."/>
            <person name="Presecan E."/>
            <person name="Pujic P."/>
            <person name="Purnelle B."/>
            <person name="Rapoport G."/>
            <person name="Rey M."/>
            <person name="Reynolds S."/>
            <person name="Rieger M."/>
            <person name="Rivolta C."/>
            <person name="Rocha E."/>
            <person name="Roche B."/>
            <person name="Rose M."/>
            <person name="Sadaie Y."/>
            <person name="Sato T."/>
            <person name="Scanlan E."/>
            <person name="Schleich S."/>
            <person name="Schroeter R."/>
            <person name="Scoffone F."/>
            <person name="Sekiguchi J."/>
            <person name="Sekowska A."/>
            <person name="Seror S.J."/>
            <person name="Serror P."/>
            <person name="Shin B.-S."/>
            <person name="Soldo B."/>
            <person name="Sorokin A."/>
            <person name="Tacconi E."/>
            <person name="Takagi T."/>
            <person name="Takahashi H."/>
            <person name="Takemaru K."/>
            <person name="Takeuchi M."/>
            <person name="Tamakoshi A."/>
            <person name="Tanaka T."/>
            <person name="Terpstra P."/>
            <person name="Tognoni A."/>
            <person name="Tosato V."/>
            <person name="Uchiyama S."/>
            <person name="Vandenbol M."/>
            <person name="Vannier F."/>
            <person name="Vassarotti A."/>
            <person name="Viari A."/>
            <person name="Wambutt R."/>
            <person name="Wedler E."/>
            <person name="Wedler H."/>
            <person name="Weitzenegger T."/>
            <person name="Winters P."/>
            <person name="Wipat A."/>
            <person name="Yamamoto H."/>
            <person name="Yamane K."/>
            <person name="Yasumoto K."/>
            <person name="Yata K."/>
            <person name="Yoshida K."/>
            <person name="Yoshikawa H.-F."/>
            <person name="Zumstein E."/>
            <person name="Yoshikawa H."/>
            <person name="Danchin A."/>
        </authorList>
    </citation>
    <scope>NUCLEOTIDE SEQUENCE [LARGE SCALE GENOMIC DNA]</scope>
    <source>
        <strain>168</strain>
    </source>
</reference>
<reference key="3">
    <citation type="journal article" date="1997" name="Mol. Microbiol.">
        <title>SpoIIQ, a forespore-expressed gene required for engulfment in Bacillus subtilis.</title>
        <authorList>
            <person name="Londono-Vallejo J.A."/>
            <person name="Frehel C."/>
            <person name="Stragier P."/>
        </authorList>
    </citation>
    <scope>FUNCTION</scope>
    <scope>DEVELOPMENTAL STAGE</scope>
    <scope>SUBCELLULAR LOCATION</scope>
</reference>
<reference key="4">
    <citation type="journal article" date="2000" name="J. Bacteriol.">
        <title>A dispensable role for forespore-specific gene expression in engulfment of the forespore during sporulation of Bacillus subtilis.</title>
        <authorList>
            <person name="Sun Y.-L."/>
            <person name="Sharp M.D."/>
            <person name="Pogliano K."/>
        </authorList>
    </citation>
    <scope>FUNCTION</scope>
</reference>
<reference key="5">
    <citation type="journal article" date="2004" name="EMBO J.">
        <title>Septal localization of forespore membrane proteins during engulfment in Bacillus subtilis.</title>
        <authorList>
            <person name="Rubio A."/>
            <person name="Pogliano K."/>
        </authorList>
    </citation>
    <scope>SUBCELLULAR LOCATION</scope>
</reference>
<reference key="6">
    <citation type="journal article" date="2004" name="Genes Dev.">
        <title>Zipper-like interaction between proteins in adjacent daughter cells mediates protein localization.</title>
        <authorList>
            <person name="Blaylock B."/>
            <person name="Jiang X."/>
            <person name="Rubio A."/>
            <person name="Moran C.P. Jr."/>
            <person name="Pogliano K."/>
        </authorList>
    </citation>
    <scope>SUBCELLULAR LOCATION</scope>
    <scope>INTERACTION WITH SPOIIIAH</scope>
</reference>
<reference key="7">
    <citation type="journal article" date="2005" name="Cell">
        <title>Developmental commitment in a bacterium.</title>
        <authorList>
            <person name="Dworkin J."/>
            <person name="Losick R."/>
        </authorList>
    </citation>
    <scope>FUNCTION</scope>
</reference>
<reference key="8">
    <citation type="journal article" date="2005" name="Mol. Microbiol.">
        <title>Subcellular localization of a sporulation membrane protein is achieved through a network of interactions along and across the septum.</title>
        <authorList>
            <person name="Doan T."/>
            <person name="Marquis K.A."/>
            <person name="Rudner D.Z."/>
        </authorList>
    </citation>
    <scope>FUNCTION</scope>
    <scope>DEVELOPMENTAL STAGE</scope>
    <scope>SUBCELLULAR LOCATION</scope>
    <scope>INTERACTION WITH SPOIIIAH</scope>
</reference>
<reference key="9">
    <citation type="journal article" date="2005" name="Mol. Microbiol.">
        <title>Engulfment-regulated proteolysis of SpoIIQ: evidence that dual checkpoints control sigma activity.</title>
        <authorList>
            <person name="Jiang X."/>
            <person name="Rubio A."/>
            <person name="Chiba S."/>
            <person name="Pogliano K."/>
        </authorList>
    </citation>
    <scope>FUNCTION</scope>
    <scope>DEGRADATION</scope>
</reference>
<reference key="10">
    <citation type="journal article" date="2006" name="Cell">
        <title>Forespore engulfment mediated by a ratchet-like mechanism.</title>
        <authorList>
            <person name="Broder D.H."/>
            <person name="Pogliano K."/>
        </authorList>
    </citation>
    <scope>FUNCTION</scope>
</reference>
<reference key="11">
    <citation type="journal article" date="2007" name="Mol. Microbiol.">
        <title>Dual localization pathways for the engulfment proteins during Bacillus subtilis sporulation.</title>
        <authorList>
            <person name="Aung S."/>
            <person name="Shum J."/>
            <person name="Abanes-De Mello A."/>
            <person name="Broder D.H."/>
            <person name="Fredlund-Gutierrez J."/>
            <person name="Chiba S."/>
            <person name="Pogliano K."/>
        </authorList>
    </citation>
    <scope>FUNCTION</scope>
</reference>
<reference key="12">
    <citation type="journal article" date="2008" name="J. Biol. Chem.">
        <title>SpoIIQ anchors membrane proteins on both sides of the sporulation septum in Bacillus subtilis.</title>
        <authorList>
            <person name="Campo N."/>
            <person name="Marquis K.A."/>
            <person name="Rudner D.Z."/>
        </authorList>
    </citation>
    <scope>FUNCTION</scope>
    <scope>SUBCELLULAR LOCATION</scope>
    <scope>INTERACTION WITH SPOIIE AND SPOIIIAH</scope>
</reference>
<reference key="13">
    <citation type="journal article" date="2008" name="Mol. Microbiol.">
        <title>A novel pathway of intercellular signalling in Bacillus subtilis involves a protein with similarity to a component of type III secretion channels.</title>
        <authorList>
            <person name="Camp A.H."/>
            <person name="Losick R."/>
        </authorList>
    </citation>
    <scope>FUNCTION</scope>
</reference>
<reference key="14">
    <citation type="journal article" date="2008" name="Proc. Natl. Acad. Sci. U.S.A.">
        <title>A channel connecting the mother cell and forespore during bacterial endospore formation.</title>
        <authorList>
            <person name="Meisner J."/>
            <person name="Wang X."/>
            <person name="Serrano M."/>
            <person name="Henriques A.O."/>
            <person name="Moran C.P. Jr."/>
        </authorList>
    </citation>
    <scope>FUNCTION</scope>
    <scope>SUBCELLULAR LOCATION</scope>
    <scope>INTERACTION WITH SPOIIIAH</scope>
</reference>